<reference key="1">
    <citation type="journal article" date="2009" name="J. Bacteriol.">
        <title>Complete genome sequence and comparative genome analysis of enteropathogenic Escherichia coli O127:H6 strain E2348/69.</title>
        <authorList>
            <person name="Iguchi A."/>
            <person name="Thomson N.R."/>
            <person name="Ogura Y."/>
            <person name="Saunders D."/>
            <person name="Ooka T."/>
            <person name="Henderson I.R."/>
            <person name="Harris D."/>
            <person name="Asadulghani M."/>
            <person name="Kurokawa K."/>
            <person name="Dean P."/>
            <person name="Kenny B."/>
            <person name="Quail M.A."/>
            <person name="Thurston S."/>
            <person name="Dougan G."/>
            <person name="Hayashi T."/>
            <person name="Parkhill J."/>
            <person name="Frankel G."/>
        </authorList>
    </citation>
    <scope>NUCLEOTIDE SEQUENCE [LARGE SCALE GENOMIC DNA]</scope>
    <source>
        <strain>E2348/69 / EPEC</strain>
    </source>
</reference>
<organism>
    <name type="scientific">Escherichia coli O127:H6 (strain E2348/69 / EPEC)</name>
    <dbReference type="NCBI Taxonomy" id="574521"/>
    <lineage>
        <taxon>Bacteria</taxon>
        <taxon>Pseudomonadati</taxon>
        <taxon>Pseudomonadota</taxon>
        <taxon>Gammaproteobacteria</taxon>
        <taxon>Enterobacterales</taxon>
        <taxon>Enterobacteriaceae</taxon>
        <taxon>Escherichia</taxon>
    </lineage>
</organism>
<feature type="chain" id="PRO_1000166919" description="Large ribosomal subunit protein uL14">
    <location>
        <begin position="1"/>
        <end position="123"/>
    </location>
</feature>
<evidence type="ECO:0000255" key="1">
    <source>
        <dbReference type="HAMAP-Rule" id="MF_01367"/>
    </source>
</evidence>
<evidence type="ECO:0000305" key="2"/>
<keyword id="KW-1185">Reference proteome</keyword>
<keyword id="KW-0687">Ribonucleoprotein</keyword>
<keyword id="KW-0689">Ribosomal protein</keyword>
<keyword id="KW-0694">RNA-binding</keyword>
<keyword id="KW-0699">rRNA-binding</keyword>
<gene>
    <name evidence="1" type="primary">rplN</name>
    <name type="ordered locus">E2348C_3573</name>
</gene>
<protein>
    <recommendedName>
        <fullName evidence="1">Large ribosomal subunit protein uL14</fullName>
    </recommendedName>
    <alternativeName>
        <fullName evidence="2">50S ribosomal protein L14</fullName>
    </alternativeName>
</protein>
<dbReference type="EMBL" id="FM180568">
    <property type="protein sequence ID" value="CAS11121.1"/>
    <property type="molecule type" value="Genomic_DNA"/>
</dbReference>
<dbReference type="RefSeq" id="WP_000613955.1">
    <property type="nucleotide sequence ID" value="NC_011601.1"/>
</dbReference>
<dbReference type="SMR" id="B7UK34"/>
<dbReference type="GeneID" id="93778677"/>
<dbReference type="KEGG" id="ecg:E2348C_3573"/>
<dbReference type="HOGENOM" id="CLU_095071_2_1_6"/>
<dbReference type="Proteomes" id="UP000008205">
    <property type="component" value="Chromosome"/>
</dbReference>
<dbReference type="GO" id="GO:0022625">
    <property type="term" value="C:cytosolic large ribosomal subunit"/>
    <property type="evidence" value="ECO:0007669"/>
    <property type="project" value="TreeGrafter"/>
</dbReference>
<dbReference type="GO" id="GO:0070180">
    <property type="term" value="F:large ribosomal subunit rRNA binding"/>
    <property type="evidence" value="ECO:0007669"/>
    <property type="project" value="TreeGrafter"/>
</dbReference>
<dbReference type="GO" id="GO:0003735">
    <property type="term" value="F:structural constituent of ribosome"/>
    <property type="evidence" value="ECO:0007669"/>
    <property type="project" value="InterPro"/>
</dbReference>
<dbReference type="GO" id="GO:0006412">
    <property type="term" value="P:translation"/>
    <property type="evidence" value="ECO:0007669"/>
    <property type="project" value="UniProtKB-UniRule"/>
</dbReference>
<dbReference type="CDD" id="cd00337">
    <property type="entry name" value="Ribosomal_uL14"/>
    <property type="match status" value="1"/>
</dbReference>
<dbReference type="FunFam" id="2.40.150.20:FF:000001">
    <property type="entry name" value="50S ribosomal protein L14"/>
    <property type="match status" value="1"/>
</dbReference>
<dbReference type="Gene3D" id="2.40.150.20">
    <property type="entry name" value="Ribosomal protein L14"/>
    <property type="match status" value="1"/>
</dbReference>
<dbReference type="HAMAP" id="MF_01367">
    <property type="entry name" value="Ribosomal_uL14"/>
    <property type="match status" value="1"/>
</dbReference>
<dbReference type="InterPro" id="IPR000218">
    <property type="entry name" value="Ribosomal_uL14"/>
</dbReference>
<dbReference type="InterPro" id="IPR005745">
    <property type="entry name" value="Ribosomal_uL14_bac-type"/>
</dbReference>
<dbReference type="InterPro" id="IPR019972">
    <property type="entry name" value="Ribosomal_uL14_CS"/>
</dbReference>
<dbReference type="InterPro" id="IPR036853">
    <property type="entry name" value="Ribosomal_uL14_sf"/>
</dbReference>
<dbReference type="NCBIfam" id="TIGR01067">
    <property type="entry name" value="rplN_bact"/>
    <property type="match status" value="1"/>
</dbReference>
<dbReference type="PANTHER" id="PTHR11761">
    <property type="entry name" value="50S/60S RIBOSOMAL PROTEIN L14/L23"/>
    <property type="match status" value="1"/>
</dbReference>
<dbReference type="PANTHER" id="PTHR11761:SF3">
    <property type="entry name" value="LARGE RIBOSOMAL SUBUNIT PROTEIN UL14M"/>
    <property type="match status" value="1"/>
</dbReference>
<dbReference type="Pfam" id="PF00238">
    <property type="entry name" value="Ribosomal_L14"/>
    <property type="match status" value="1"/>
</dbReference>
<dbReference type="SMART" id="SM01374">
    <property type="entry name" value="Ribosomal_L14"/>
    <property type="match status" value="1"/>
</dbReference>
<dbReference type="SUPFAM" id="SSF50193">
    <property type="entry name" value="Ribosomal protein L14"/>
    <property type="match status" value="1"/>
</dbReference>
<dbReference type="PROSITE" id="PS00049">
    <property type="entry name" value="RIBOSOMAL_L14"/>
    <property type="match status" value="1"/>
</dbReference>
<comment type="function">
    <text evidence="1">Binds to 23S rRNA. Forms part of two intersubunit bridges in the 70S ribosome.</text>
</comment>
<comment type="subunit">
    <text evidence="1">Part of the 50S ribosomal subunit. Forms a cluster with proteins L3 and L19. In the 70S ribosome, L14 and L19 interact and together make contacts with the 16S rRNA in bridges B5 and B8.</text>
</comment>
<comment type="similarity">
    <text evidence="1">Belongs to the universal ribosomal protein uL14 family.</text>
</comment>
<proteinExistence type="inferred from homology"/>
<name>RL14_ECO27</name>
<sequence length="123" mass="13541">MIQEQTMLNVADNSGARRVMCIKVLGGSHRRYAGVGDIIKITIKEAIPRGKVKKGDVLKAVVVRTKKGVRRPDGSVIRFDGNACVLLNNNSEQPIGTRIFGPVTRELRSEKFMKIISLAPEVL</sequence>
<accession>B7UK34</accession>